<evidence type="ECO:0000255" key="1">
    <source>
        <dbReference type="HAMAP-Rule" id="MF_01850"/>
    </source>
</evidence>
<evidence type="ECO:0000305" key="2"/>
<gene>
    <name evidence="1" type="primary">ttcA</name>
    <name type="ordered locus">XF_0569</name>
</gene>
<dbReference type="EC" id="2.8.1.-" evidence="1"/>
<dbReference type="EMBL" id="AE003849">
    <property type="protein sequence ID" value="AAF83379.1"/>
    <property type="status" value="ALT_INIT"/>
    <property type="molecule type" value="Genomic_DNA"/>
</dbReference>
<dbReference type="PIR" id="G82791">
    <property type="entry name" value="G82791"/>
</dbReference>
<dbReference type="RefSeq" id="WP_010893095.1">
    <property type="nucleotide sequence ID" value="NC_002488.3"/>
</dbReference>
<dbReference type="SMR" id="Q9PFT8"/>
<dbReference type="STRING" id="160492.XF_0569"/>
<dbReference type="KEGG" id="xfa:XF_0569"/>
<dbReference type="eggNOG" id="COG0037">
    <property type="taxonomic scope" value="Bacteria"/>
</dbReference>
<dbReference type="HOGENOM" id="CLU_026481_0_1_6"/>
<dbReference type="Proteomes" id="UP000000812">
    <property type="component" value="Chromosome"/>
</dbReference>
<dbReference type="GO" id="GO:0005737">
    <property type="term" value="C:cytoplasm"/>
    <property type="evidence" value="ECO:0007669"/>
    <property type="project" value="UniProtKB-SubCell"/>
</dbReference>
<dbReference type="GO" id="GO:0051539">
    <property type="term" value="F:4 iron, 4 sulfur cluster binding"/>
    <property type="evidence" value="ECO:0007669"/>
    <property type="project" value="UniProtKB-UniRule"/>
</dbReference>
<dbReference type="GO" id="GO:0005524">
    <property type="term" value="F:ATP binding"/>
    <property type="evidence" value="ECO:0007669"/>
    <property type="project" value="UniProtKB-UniRule"/>
</dbReference>
<dbReference type="GO" id="GO:0000287">
    <property type="term" value="F:magnesium ion binding"/>
    <property type="evidence" value="ECO:0007669"/>
    <property type="project" value="UniProtKB-UniRule"/>
</dbReference>
<dbReference type="GO" id="GO:0016783">
    <property type="term" value="F:sulfurtransferase activity"/>
    <property type="evidence" value="ECO:0007669"/>
    <property type="project" value="UniProtKB-UniRule"/>
</dbReference>
<dbReference type="GO" id="GO:0000049">
    <property type="term" value="F:tRNA binding"/>
    <property type="evidence" value="ECO:0007669"/>
    <property type="project" value="UniProtKB-KW"/>
</dbReference>
<dbReference type="GO" id="GO:0034227">
    <property type="term" value="P:tRNA thio-modification"/>
    <property type="evidence" value="ECO:0007669"/>
    <property type="project" value="UniProtKB-UniRule"/>
</dbReference>
<dbReference type="CDD" id="cd24138">
    <property type="entry name" value="TtcA-like"/>
    <property type="match status" value="1"/>
</dbReference>
<dbReference type="Gene3D" id="3.40.50.620">
    <property type="entry name" value="HUPs"/>
    <property type="match status" value="1"/>
</dbReference>
<dbReference type="HAMAP" id="MF_01850">
    <property type="entry name" value="TtcA"/>
    <property type="match status" value="1"/>
</dbReference>
<dbReference type="InterPro" id="IPR014729">
    <property type="entry name" value="Rossmann-like_a/b/a_fold"/>
</dbReference>
<dbReference type="InterPro" id="IPR011063">
    <property type="entry name" value="TilS/TtcA_N"/>
</dbReference>
<dbReference type="InterPro" id="IPR012089">
    <property type="entry name" value="tRNA_Cyd_32_2_STrfase"/>
</dbReference>
<dbReference type="InterPro" id="IPR035107">
    <property type="entry name" value="tRNA_thiolation_TtcA_Ctu1"/>
</dbReference>
<dbReference type="NCBIfam" id="NF007972">
    <property type="entry name" value="PRK10696.1"/>
    <property type="match status" value="1"/>
</dbReference>
<dbReference type="PANTHER" id="PTHR43686:SF1">
    <property type="entry name" value="AMINOTRAN_5 DOMAIN-CONTAINING PROTEIN"/>
    <property type="match status" value="1"/>
</dbReference>
<dbReference type="PANTHER" id="PTHR43686">
    <property type="entry name" value="SULFURTRANSFERASE-RELATED"/>
    <property type="match status" value="1"/>
</dbReference>
<dbReference type="Pfam" id="PF01171">
    <property type="entry name" value="ATP_bind_3"/>
    <property type="match status" value="1"/>
</dbReference>
<dbReference type="PIRSF" id="PIRSF004976">
    <property type="entry name" value="ATPase_YdaO"/>
    <property type="match status" value="1"/>
</dbReference>
<dbReference type="SUPFAM" id="SSF52402">
    <property type="entry name" value="Adenine nucleotide alpha hydrolases-like"/>
    <property type="match status" value="1"/>
</dbReference>
<protein>
    <recommendedName>
        <fullName evidence="1">tRNA-cytidine(32) 2-sulfurtransferase</fullName>
        <ecNumber evidence="1">2.8.1.-</ecNumber>
    </recommendedName>
    <alternativeName>
        <fullName evidence="1">Two-thiocytidine biosynthesis protein A</fullName>
    </alternativeName>
    <alternativeName>
        <fullName evidence="1">tRNA 2-thiocytidine biosynthesis protein TtcA</fullName>
    </alternativeName>
</protein>
<reference key="1">
    <citation type="journal article" date="2000" name="Nature">
        <title>The genome sequence of the plant pathogen Xylella fastidiosa.</title>
        <authorList>
            <person name="Simpson A.J.G."/>
            <person name="Reinach F.C."/>
            <person name="Arruda P."/>
            <person name="Abreu F.A."/>
            <person name="Acencio M."/>
            <person name="Alvarenga R."/>
            <person name="Alves L.M.C."/>
            <person name="Araya J.E."/>
            <person name="Baia G.S."/>
            <person name="Baptista C.S."/>
            <person name="Barros M.H."/>
            <person name="Bonaccorsi E.D."/>
            <person name="Bordin S."/>
            <person name="Bove J.M."/>
            <person name="Briones M.R.S."/>
            <person name="Bueno M.R.P."/>
            <person name="Camargo A.A."/>
            <person name="Camargo L.E.A."/>
            <person name="Carraro D.M."/>
            <person name="Carrer H."/>
            <person name="Colauto N.B."/>
            <person name="Colombo C."/>
            <person name="Costa F.F."/>
            <person name="Costa M.C.R."/>
            <person name="Costa-Neto C.M."/>
            <person name="Coutinho L.L."/>
            <person name="Cristofani M."/>
            <person name="Dias-Neto E."/>
            <person name="Docena C."/>
            <person name="El-Dorry H."/>
            <person name="Facincani A.P."/>
            <person name="Ferreira A.J.S."/>
            <person name="Ferreira V.C.A."/>
            <person name="Ferro J.A."/>
            <person name="Fraga J.S."/>
            <person name="Franca S.C."/>
            <person name="Franco M.C."/>
            <person name="Frohme M."/>
            <person name="Furlan L.R."/>
            <person name="Garnier M."/>
            <person name="Goldman G.H."/>
            <person name="Goldman M.H.S."/>
            <person name="Gomes S.L."/>
            <person name="Gruber A."/>
            <person name="Ho P.L."/>
            <person name="Hoheisel J.D."/>
            <person name="Junqueira M.L."/>
            <person name="Kemper E.L."/>
            <person name="Kitajima J.P."/>
            <person name="Krieger J.E."/>
            <person name="Kuramae E.E."/>
            <person name="Laigret F."/>
            <person name="Lambais M.R."/>
            <person name="Leite L.C.C."/>
            <person name="Lemos E.G.M."/>
            <person name="Lemos M.V.F."/>
            <person name="Lopes S.A."/>
            <person name="Lopes C.R."/>
            <person name="Machado J.A."/>
            <person name="Machado M.A."/>
            <person name="Madeira A.M.B.N."/>
            <person name="Madeira H.M.F."/>
            <person name="Marino C.L."/>
            <person name="Marques M.V."/>
            <person name="Martins E.A.L."/>
            <person name="Martins E.M.F."/>
            <person name="Matsukuma A.Y."/>
            <person name="Menck C.F.M."/>
            <person name="Miracca E.C."/>
            <person name="Miyaki C.Y."/>
            <person name="Monteiro-Vitorello C.B."/>
            <person name="Moon D.H."/>
            <person name="Nagai M.A."/>
            <person name="Nascimento A.L.T.O."/>
            <person name="Netto L.E.S."/>
            <person name="Nhani A. Jr."/>
            <person name="Nobrega F.G."/>
            <person name="Nunes L.R."/>
            <person name="Oliveira M.A."/>
            <person name="de Oliveira M.C."/>
            <person name="de Oliveira R.C."/>
            <person name="Palmieri D.A."/>
            <person name="Paris A."/>
            <person name="Peixoto B.R."/>
            <person name="Pereira G.A.G."/>
            <person name="Pereira H.A. Jr."/>
            <person name="Pesquero J.B."/>
            <person name="Quaggio R.B."/>
            <person name="Roberto P.G."/>
            <person name="Rodrigues V."/>
            <person name="de Rosa A.J.M."/>
            <person name="de Rosa V.E. Jr."/>
            <person name="de Sa R.G."/>
            <person name="Santelli R.V."/>
            <person name="Sawasaki H.E."/>
            <person name="da Silva A.C.R."/>
            <person name="da Silva A.M."/>
            <person name="da Silva F.R."/>
            <person name="Silva W.A. Jr."/>
            <person name="da Silveira J.F."/>
            <person name="Silvestri M.L.Z."/>
            <person name="Siqueira W.J."/>
            <person name="de Souza A.A."/>
            <person name="de Souza A.P."/>
            <person name="Terenzi M.F."/>
            <person name="Truffi D."/>
            <person name="Tsai S.M."/>
            <person name="Tsuhako M.H."/>
            <person name="Vallada H."/>
            <person name="Van Sluys M.A."/>
            <person name="Verjovski-Almeida S."/>
            <person name="Vettore A.L."/>
            <person name="Zago M.A."/>
            <person name="Zatz M."/>
            <person name="Meidanis J."/>
            <person name="Setubal J.C."/>
        </authorList>
    </citation>
    <scope>NUCLEOTIDE SEQUENCE [LARGE SCALE GENOMIC DNA]</scope>
    <source>
        <strain>9a5c</strain>
    </source>
</reference>
<organism>
    <name type="scientific">Xylella fastidiosa (strain 9a5c)</name>
    <dbReference type="NCBI Taxonomy" id="160492"/>
    <lineage>
        <taxon>Bacteria</taxon>
        <taxon>Pseudomonadati</taxon>
        <taxon>Pseudomonadota</taxon>
        <taxon>Gammaproteobacteria</taxon>
        <taxon>Lysobacterales</taxon>
        <taxon>Lysobacteraceae</taxon>
        <taxon>Xylella</taxon>
    </lineage>
</organism>
<name>TTCA_XYLFA</name>
<keyword id="KW-0004">4Fe-4S</keyword>
<keyword id="KW-0067">ATP-binding</keyword>
<keyword id="KW-0963">Cytoplasm</keyword>
<keyword id="KW-0408">Iron</keyword>
<keyword id="KW-0411">Iron-sulfur</keyword>
<keyword id="KW-0460">Magnesium</keyword>
<keyword id="KW-0479">Metal-binding</keyword>
<keyword id="KW-0547">Nucleotide-binding</keyword>
<keyword id="KW-0694">RNA-binding</keyword>
<keyword id="KW-0808">Transferase</keyword>
<keyword id="KW-0819">tRNA processing</keyword>
<keyword id="KW-0820">tRNA-binding</keyword>
<proteinExistence type="inferred from homology"/>
<sequence>MDATFPPQRNITARPAPDRIRREQCKLAKRLRRQVGQAIADFGMIEANDKIMVCLSGGKDSYTLLDMLLQLRAKAPVPFELTAVNLDQKQPGFPKHVLPEYLSSIGMPHHIIEQDTYSVVTRVVPEGKTLCALCSRMRRGALYAYAETQGFTKIALGHHRDDMVATFFMNLFHHAKLSGMPPKLRSDNGKHVVIRPLAYVSETDIIAYADAREFPIIPCNLCGSQENLQRKQVGVILKAWEKEYPGRIEQIARALGNIRPSQLADQSLFDFQALGRHSNTPLPNAHAWLAGDLANDTAP</sequence>
<comment type="function">
    <text evidence="1">Catalyzes the ATP-dependent 2-thiolation of cytidine in position 32 of tRNA, to form 2-thiocytidine (s(2)C32). The sulfur atoms are provided by the cysteine/cysteine desulfurase (IscS) system.</text>
</comment>
<comment type="catalytic activity">
    <reaction evidence="1">
        <text>cytidine(32) in tRNA + S-sulfanyl-L-cysteinyl-[cysteine desulfurase] + AH2 + ATP = 2-thiocytidine(32) in tRNA + L-cysteinyl-[cysteine desulfurase] + A + AMP + diphosphate + H(+)</text>
        <dbReference type="Rhea" id="RHEA:57048"/>
        <dbReference type="Rhea" id="RHEA-COMP:10288"/>
        <dbReference type="Rhea" id="RHEA-COMP:12157"/>
        <dbReference type="Rhea" id="RHEA-COMP:12158"/>
        <dbReference type="Rhea" id="RHEA-COMP:14821"/>
        <dbReference type="ChEBI" id="CHEBI:13193"/>
        <dbReference type="ChEBI" id="CHEBI:15378"/>
        <dbReference type="ChEBI" id="CHEBI:17499"/>
        <dbReference type="ChEBI" id="CHEBI:29950"/>
        <dbReference type="ChEBI" id="CHEBI:30616"/>
        <dbReference type="ChEBI" id="CHEBI:33019"/>
        <dbReference type="ChEBI" id="CHEBI:61963"/>
        <dbReference type="ChEBI" id="CHEBI:82748"/>
        <dbReference type="ChEBI" id="CHEBI:141453"/>
        <dbReference type="ChEBI" id="CHEBI:456215"/>
    </reaction>
    <physiologicalReaction direction="left-to-right" evidence="1">
        <dbReference type="Rhea" id="RHEA:57049"/>
    </physiologicalReaction>
</comment>
<comment type="cofactor">
    <cofactor evidence="1">
        <name>Mg(2+)</name>
        <dbReference type="ChEBI" id="CHEBI:18420"/>
    </cofactor>
</comment>
<comment type="cofactor">
    <cofactor evidence="1">
        <name>[4Fe-4S] cluster</name>
        <dbReference type="ChEBI" id="CHEBI:49883"/>
    </cofactor>
    <text evidence="1">Binds 1 [4Fe-4S] cluster per subunit. The cluster is chelated by three Cys residues, the fourth Fe has a free coordination site that may bind a sulfur atom transferred from the persulfide of IscS.</text>
</comment>
<comment type="pathway">
    <text evidence="1">tRNA modification.</text>
</comment>
<comment type="subunit">
    <text evidence="1">Homodimer.</text>
</comment>
<comment type="subcellular location">
    <subcellularLocation>
        <location evidence="1">Cytoplasm</location>
    </subcellularLocation>
</comment>
<comment type="miscellaneous">
    <text evidence="1">The thiolation reaction likely consists of two steps: a first activation step by ATP to form an adenylated intermediate of the target base of tRNA, and a second nucleophilic substitution step of the sulfur (S) atom supplied by the hydrosulfide attached to the Fe-S cluster.</text>
</comment>
<comment type="similarity">
    <text evidence="1">Belongs to the TtcA family.</text>
</comment>
<comment type="sequence caution" evidence="2">
    <conflict type="erroneous initiation">
        <sequence resource="EMBL-CDS" id="AAF83379"/>
    </conflict>
    <text>Extended N-terminus.</text>
</comment>
<accession>Q9PFT8</accession>
<feature type="chain" id="PRO_0000348876" description="tRNA-cytidine(32) 2-sulfurtransferase">
    <location>
        <begin position="1"/>
        <end position="299"/>
    </location>
</feature>
<feature type="short sequence motif" description="PP-loop motif" evidence="1">
    <location>
        <begin position="56"/>
        <end position="61"/>
    </location>
</feature>
<feature type="binding site" evidence="1">
    <location>
        <position position="131"/>
    </location>
    <ligand>
        <name>[4Fe-4S] cluster</name>
        <dbReference type="ChEBI" id="CHEBI:49883"/>
    </ligand>
</feature>
<feature type="binding site" evidence="1">
    <location>
        <position position="134"/>
    </location>
    <ligand>
        <name>[4Fe-4S] cluster</name>
        <dbReference type="ChEBI" id="CHEBI:49883"/>
    </ligand>
</feature>
<feature type="binding site" evidence="1">
    <location>
        <position position="222"/>
    </location>
    <ligand>
        <name>[4Fe-4S] cluster</name>
        <dbReference type="ChEBI" id="CHEBI:49883"/>
    </ligand>
</feature>